<keyword id="KW-0025">Alternative splicing</keyword>
<keyword id="KW-0027">Amidation</keyword>
<keyword id="KW-0903">Direct protein sequencing</keyword>
<keyword id="KW-0372">Hormone</keyword>
<keyword id="KW-0449">Lipoprotein</keyword>
<keyword id="KW-1185">Reference proteome</keyword>
<keyword id="KW-0964">Secreted</keyword>
<keyword id="KW-0732">Signal</keyword>
<feature type="signal peptide" evidence="3 4">
    <location>
        <begin position="1"/>
        <end position="23"/>
    </location>
</feature>
<feature type="peptide" id="PRO_0000019209" description="Ghrelin">
    <location>
        <begin position="24"/>
        <end position="51"/>
    </location>
</feature>
<feature type="propeptide" id="PRO_0000019210" description="Removed in mature form" evidence="6">
    <location>
        <begin position="52"/>
        <end position="75"/>
    </location>
</feature>
<feature type="peptide" id="PRO_0000045146" description="Obestatin-23">
    <location>
        <begin position="76"/>
        <end position="98"/>
    </location>
</feature>
<feature type="peptide" id="PRO_0000045147" description="Obestatin-13" evidence="8">
    <location>
        <begin position="86"/>
        <end position="98"/>
    </location>
</feature>
<feature type="propeptide" id="PRO_0000045148" description="Removed in mature form">
    <location>
        <begin position="99"/>
        <end position="117"/>
    </location>
</feature>
<feature type="region of interest" description="Disordered" evidence="2">
    <location>
        <begin position="28"/>
        <end position="68"/>
    </location>
</feature>
<feature type="compositionally biased region" description="Basic and acidic residues" evidence="2">
    <location>
        <begin position="31"/>
        <end position="43"/>
    </location>
</feature>
<feature type="modified residue" description="Leucine amide" evidence="6">
    <location>
        <position position="98"/>
    </location>
</feature>
<feature type="lipid moiety-binding region" description="O-decanoyl serine; alternate" evidence="1">
    <location>
        <position position="26"/>
    </location>
</feature>
<feature type="lipid moiety-binding region" description="O-hexanoyl serine; alternate" evidence="1">
    <location>
        <position position="26"/>
    </location>
</feature>
<feature type="lipid moiety-binding region" description="O-octanoyl serine; alternate" evidence="3 4">
    <location>
        <position position="26"/>
    </location>
</feature>
<feature type="splice variant" id="VSP_003248" description="In isoform 2." evidence="7">
    <location>
        <position position="37"/>
    </location>
</feature>
<evidence type="ECO:0000250" key="1">
    <source>
        <dbReference type="UniProtKB" id="Q9EQX0"/>
    </source>
</evidence>
<evidence type="ECO:0000256" key="2">
    <source>
        <dbReference type="SAM" id="MobiDB-lite"/>
    </source>
</evidence>
<evidence type="ECO:0000269" key="3">
    <source>
    </source>
</evidence>
<evidence type="ECO:0000269" key="4">
    <source>
    </source>
</evidence>
<evidence type="ECO:0000269" key="5">
    <source>
    </source>
</evidence>
<evidence type="ECO:0000269" key="6">
    <source>
    </source>
</evidence>
<evidence type="ECO:0000303" key="7">
    <source>
    </source>
</evidence>
<evidence type="ECO:0000305" key="8"/>
<name>GHRL_RAT</name>
<reference key="1">
    <citation type="journal article" date="1999" name="Nature">
        <title>Ghrelin is a growth-hormone-releasing acylated peptide from stomach.</title>
        <authorList>
            <person name="Kojima M."/>
            <person name="Hosoda H."/>
            <person name="Date Y."/>
            <person name="Nakazato M."/>
            <person name="Matsuo H."/>
            <person name="Kangawa K."/>
        </authorList>
    </citation>
    <scope>NUCLEOTIDE SEQUENCE [MRNA] (ISOFORM 1)</scope>
    <scope>PROTEIN SEQUENCE OF 24-51</scope>
    <scope>MASS SPECTROMETRY</scope>
    <scope>ACYLATION AT SER-26</scope>
    <source>
        <strain>Sprague-Dawley</strain>
        <tissue>Stomach</tissue>
    </source>
</reference>
<reference key="2">
    <citation type="journal article" date="2000" name="J. Biol. Chem.">
        <title>Purification and characterization of rat des-Gln14-ghrelin, a second endogenous ligand for the growth hormone secretagogue receptor.</title>
        <authorList>
            <person name="Hosoda H."/>
            <person name="Kojima M."/>
            <person name="Matsuo H."/>
            <person name="Kangawa K."/>
        </authorList>
    </citation>
    <scope>NUCLEOTIDE SEQUENCE [MRNA] (ISOFORMS 1 AND 2)</scope>
    <scope>PROTEIN SEQUENCE OF 24-51</scope>
    <scope>MASS SPECTROMETRY</scope>
    <scope>ACYLATION AT SER-26</scope>
    <source>
        <strain>Sprague-Dawley</strain>
        <tissue>Stomach</tissue>
    </source>
</reference>
<reference key="3">
    <citation type="journal article" date="2005" name="Science">
        <title>Obestatin, a peptide encoded by the ghrelin gene, opposes ghrelin's effects on food intake.</title>
        <authorList>
            <person name="Zhang J.V."/>
            <person name="Ren P.G."/>
            <person name="Avsian-Kretchmer O."/>
            <person name="Luo C.W."/>
            <person name="Rauch R."/>
            <person name="Klein C."/>
            <person name="Hsueh A.J."/>
        </authorList>
    </citation>
    <scope>PROTEIN SEQUENCE OF 76-95</scope>
    <scope>FUNCTION OF OBESTATIN</scope>
    <scope>CHARACTERIZATION</scope>
    <scope>AMIDATION AT LEU-98</scope>
    <scope>MASS SPECTROMETRY</scope>
    <scope>INTERACTION WITH GPR39</scope>
</reference>
<reference key="4">
    <citation type="journal article" date="2000" name="Biochem. Biophys. Res. Commun.">
        <title>Ghrelin and des-acyl ghrelin: two major forms of rat ghrelin peptide in gastrointestinal tissue.</title>
        <authorList>
            <person name="Hosoda H."/>
            <person name="Kojima M."/>
            <person name="Matsuo H."/>
            <person name="Kangawa K."/>
        </authorList>
    </citation>
    <scope>TISSUE SPECIFICITY</scope>
</reference>
<reference key="5">
    <citation type="journal article" date="2001" name="Biochem. Biophys. Res. Commun.">
        <title>Structure-activity relationship of ghrelin: pharmacological study of ghrelin peptides.</title>
        <authorList>
            <person name="Matsumoto M."/>
            <person name="Hosoda H."/>
            <person name="Kitajima Y."/>
            <person name="Morozumi N."/>
            <person name="Minamitake Y."/>
            <person name="Tanaka S."/>
            <person name="Matsuo H."/>
            <person name="Kojima M."/>
            <person name="Hayashi Y."/>
            <person name="Kangawa K."/>
        </authorList>
    </citation>
    <scope>STRUCTURE-ACTIVITY RELATIONSHIP</scope>
</reference>
<reference key="6">
    <citation type="journal article" date="2001" name="Trends Endocrinol. Metab.">
        <title>Ghrelin: discovery of the natural endogenous ligand for the growth hormone secretagogue receptor.</title>
        <authorList>
            <person name="Kojima M."/>
            <person name="Hosoda H."/>
            <person name="Matsuo H."/>
            <person name="Kangawa K."/>
        </authorList>
    </citation>
    <scope>REVIEW</scope>
</reference>
<reference key="7">
    <citation type="journal article" date="2007" name="Science">
        <title>Comment on 'Obestatin, a peptide encoded by the ghrelin gene, opposes ghrelin's effects on food intake'.</title>
        <authorList>
            <person name="Chartrel N."/>
            <person name="Alvear-Perez R."/>
            <person name="Leprince J."/>
            <person name="Iturrioz X."/>
            <person name="Reaux-Le Goazigo A."/>
            <person name="Audinot V."/>
            <person name="Chomarat P."/>
            <person name="Coge F."/>
            <person name="Nosjean O."/>
            <person name="Rodriguez M."/>
            <person name="Galizzi J.P."/>
            <person name="Boutin J.A."/>
            <person name="Vaudry H."/>
            <person name="Llorens-Cortes C."/>
        </authorList>
    </citation>
    <scope>FUNCTION OF OBESTATIN</scope>
</reference>
<proteinExistence type="evidence at protein level"/>
<dbReference type="EMBL" id="AB029433">
    <property type="protein sequence ID" value="BAA89370.1"/>
    <property type="molecule type" value="mRNA"/>
</dbReference>
<dbReference type="EMBL" id="AB035699">
    <property type="protein sequence ID" value="BAB11956.1"/>
    <property type="molecule type" value="mRNA"/>
</dbReference>
<dbReference type="PIR" id="B59316">
    <property type="entry name" value="B59316"/>
</dbReference>
<dbReference type="RefSeq" id="NP_067701.1">
    <molecule id="Q9QYH7-1"/>
    <property type="nucleotide sequence ID" value="NM_021669.2"/>
</dbReference>
<dbReference type="SMR" id="Q9QYH7"/>
<dbReference type="FunCoup" id="Q9QYH7">
    <property type="interactions" value="46"/>
</dbReference>
<dbReference type="IntAct" id="Q9QYH7">
    <property type="interactions" value="2"/>
</dbReference>
<dbReference type="STRING" id="10116.ENSRNOP00000014103"/>
<dbReference type="iPTMnet" id="Q9QYH7"/>
<dbReference type="PhosphoSitePlus" id="Q9QYH7"/>
<dbReference type="PaxDb" id="10116-ENSRNOP00000014103"/>
<dbReference type="Ensembl" id="ENSRNOT00000014103.2">
    <molecule id="Q9QYH7-1"/>
    <property type="protein sequence ID" value="ENSRNOP00000014103.1"/>
    <property type="gene ID" value="ENSRNOG00000010349.5"/>
</dbReference>
<dbReference type="GeneID" id="59301"/>
<dbReference type="KEGG" id="rno:59301"/>
<dbReference type="UCSC" id="RGD:632283">
    <molecule id="Q9QYH7-1"/>
    <property type="organism name" value="rat"/>
</dbReference>
<dbReference type="AGR" id="RGD:632283"/>
<dbReference type="CTD" id="51738"/>
<dbReference type="RGD" id="632283">
    <property type="gene designation" value="Ghrl"/>
</dbReference>
<dbReference type="eggNOG" id="ENOG502SFY3">
    <property type="taxonomic scope" value="Eukaryota"/>
</dbReference>
<dbReference type="GeneTree" id="ENSGT00390000004064"/>
<dbReference type="HOGENOM" id="CLU_168380_0_0_1"/>
<dbReference type="InParanoid" id="Q9QYH7"/>
<dbReference type="OMA" id="QYQQYGR"/>
<dbReference type="OrthoDB" id="9896247at2759"/>
<dbReference type="PhylomeDB" id="Q9QYH7"/>
<dbReference type="TreeFam" id="TF336219"/>
<dbReference type="Reactome" id="R-RNO-416476">
    <property type="pathway name" value="G alpha (q) signalling events"/>
</dbReference>
<dbReference type="Reactome" id="R-RNO-422085">
    <property type="pathway name" value="Synthesis, secretion, and deacylation of Ghrelin"/>
</dbReference>
<dbReference type="PRO" id="PR:Q9QYH7"/>
<dbReference type="Proteomes" id="UP000002494">
    <property type="component" value="Chromosome 4"/>
</dbReference>
<dbReference type="Bgee" id="ENSRNOG00000010349">
    <property type="expression patterns" value="Expressed in stomach and 18 other cell types or tissues"/>
</dbReference>
<dbReference type="GO" id="GO:0030424">
    <property type="term" value="C:axon"/>
    <property type="evidence" value="ECO:0000250"/>
    <property type="project" value="UniProtKB"/>
</dbReference>
<dbReference type="GO" id="GO:0005737">
    <property type="term" value="C:cytoplasm"/>
    <property type="evidence" value="ECO:0000266"/>
    <property type="project" value="RGD"/>
</dbReference>
<dbReference type="GO" id="GO:0005576">
    <property type="term" value="C:extracellular region"/>
    <property type="evidence" value="ECO:0000250"/>
    <property type="project" value="UniProtKB"/>
</dbReference>
<dbReference type="GO" id="GO:0005615">
    <property type="term" value="C:extracellular space"/>
    <property type="evidence" value="ECO:0000250"/>
    <property type="project" value="UniProtKB"/>
</dbReference>
<dbReference type="GO" id="GO:0098978">
    <property type="term" value="C:glutamatergic synapse"/>
    <property type="evidence" value="ECO:0000314"/>
    <property type="project" value="SynGO"/>
</dbReference>
<dbReference type="GO" id="GO:0099013">
    <property type="term" value="C:neuronal dense core vesicle lumen"/>
    <property type="evidence" value="ECO:0000266"/>
    <property type="project" value="RGD"/>
</dbReference>
<dbReference type="GO" id="GO:0098794">
    <property type="term" value="C:postsynapse"/>
    <property type="evidence" value="ECO:0007669"/>
    <property type="project" value="GOC"/>
</dbReference>
<dbReference type="GO" id="GO:0098685">
    <property type="term" value="C:Schaffer collateral - CA1 synapse"/>
    <property type="evidence" value="ECO:0000314"/>
    <property type="project" value="SynGO"/>
</dbReference>
<dbReference type="GO" id="GO:0001664">
    <property type="term" value="F:G protein-coupled receptor binding"/>
    <property type="evidence" value="ECO:0000353"/>
    <property type="project" value="UniProtKB"/>
</dbReference>
<dbReference type="GO" id="GO:0031768">
    <property type="term" value="F:ghrelin receptor binding"/>
    <property type="evidence" value="ECO:0000315"/>
    <property type="project" value="RGD"/>
</dbReference>
<dbReference type="GO" id="GO:0016608">
    <property type="term" value="F:growth hormone-releasing hormone activity"/>
    <property type="evidence" value="ECO:0000314"/>
    <property type="project" value="UniProtKB"/>
</dbReference>
<dbReference type="GO" id="GO:0005179">
    <property type="term" value="F:hormone activity"/>
    <property type="evidence" value="ECO:0000314"/>
    <property type="project" value="RGD"/>
</dbReference>
<dbReference type="GO" id="GO:0030296">
    <property type="term" value="F:protein tyrosine kinase activator activity"/>
    <property type="evidence" value="ECO:0000250"/>
    <property type="project" value="UniProtKB"/>
</dbReference>
<dbReference type="GO" id="GO:0008154">
    <property type="term" value="P:actin polymerization or depolymerization"/>
    <property type="evidence" value="ECO:0000250"/>
    <property type="project" value="UniProtKB"/>
</dbReference>
<dbReference type="GO" id="GO:0008343">
    <property type="term" value="P:adult feeding behavior"/>
    <property type="evidence" value="ECO:0000250"/>
    <property type="project" value="HGNC-UCL"/>
</dbReference>
<dbReference type="GO" id="GO:0046697">
    <property type="term" value="P:decidualization"/>
    <property type="evidence" value="ECO:0000250"/>
    <property type="project" value="UniProtKB"/>
</dbReference>
<dbReference type="GO" id="GO:0016358">
    <property type="term" value="P:dendrite development"/>
    <property type="evidence" value="ECO:0000266"/>
    <property type="project" value="RGD"/>
</dbReference>
<dbReference type="GO" id="GO:0060079">
    <property type="term" value="P:excitatory postsynaptic potential"/>
    <property type="evidence" value="ECO:0000266"/>
    <property type="project" value="RGD"/>
</dbReference>
<dbReference type="GO" id="GO:0007186">
    <property type="term" value="P:G protein-coupled receptor signaling pathway"/>
    <property type="evidence" value="ECO:0000314"/>
    <property type="project" value="UniProtKB"/>
</dbReference>
<dbReference type="GO" id="GO:0001696">
    <property type="term" value="P:gastric acid secretion"/>
    <property type="evidence" value="ECO:0000314"/>
    <property type="project" value="UniProtKB"/>
</dbReference>
<dbReference type="GO" id="GO:0043066">
    <property type="term" value="P:negative regulation of apoptotic process"/>
    <property type="evidence" value="ECO:0000314"/>
    <property type="project" value="UniProtKB"/>
</dbReference>
<dbReference type="GO" id="GO:0042322">
    <property type="term" value="P:negative regulation of circadian sleep/wake cycle, REM sleep"/>
    <property type="evidence" value="ECO:0000266"/>
    <property type="project" value="RGD"/>
</dbReference>
<dbReference type="GO" id="GO:0001937">
    <property type="term" value="P:negative regulation of endothelial cell proliferation"/>
    <property type="evidence" value="ECO:0000250"/>
    <property type="project" value="UniProtKB"/>
</dbReference>
<dbReference type="GO" id="GO:0050728">
    <property type="term" value="P:negative regulation of inflammatory response"/>
    <property type="evidence" value="ECO:0000250"/>
    <property type="project" value="UniProtKB"/>
</dbReference>
<dbReference type="GO" id="GO:0046676">
    <property type="term" value="P:negative regulation of insulin secretion"/>
    <property type="evidence" value="ECO:0000314"/>
    <property type="project" value="MGI"/>
</dbReference>
<dbReference type="GO" id="GO:0032691">
    <property type="term" value="P:negative regulation of interleukin-1 beta production"/>
    <property type="evidence" value="ECO:0000314"/>
    <property type="project" value="RGD"/>
</dbReference>
<dbReference type="GO" id="GO:0032715">
    <property type="term" value="P:negative regulation of interleukin-6 production"/>
    <property type="evidence" value="ECO:0000250"/>
    <property type="project" value="UniProtKB"/>
</dbReference>
<dbReference type="GO" id="GO:0040013">
    <property type="term" value="P:negative regulation of locomotion"/>
    <property type="evidence" value="ECO:0000266"/>
    <property type="project" value="RGD"/>
</dbReference>
<dbReference type="GO" id="GO:0032720">
    <property type="term" value="P:negative regulation of tumor necrosis factor production"/>
    <property type="evidence" value="ECO:0000314"/>
    <property type="project" value="RGD"/>
</dbReference>
<dbReference type="GO" id="GO:1904179">
    <property type="term" value="P:positive regulation of adipose tissue development"/>
    <property type="evidence" value="ECO:0000314"/>
    <property type="project" value="RGD"/>
</dbReference>
<dbReference type="GO" id="GO:0032100">
    <property type="term" value="P:positive regulation of appetite"/>
    <property type="evidence" value="ECO:0000315"/>
    <property type="project" value="RGD"/>
</dbReference>
<dbReference type="GO" id="GO:1903012">
    <property type="term" value="P:positive regulation of bone development"/>
    <property type="evidence" value="ECO:0000314"/>
    <property type="project" value="RGD"/>
</dbReference>
<dbReference type="GO" id="GO:0046010">
    <property type="term" value="P:positive regulation of circadian sleep/wake cycle, non-REM sleep"/>
    <property type="evidence" value="ECO:0000266"/>
    <property type="project" value="RGD"/>
</dbReference>
<dbReference type="GO" id="GO:0120162">
    <property type="term" value="P:positive regulation of cold-induced thermogenesis"/>
    <property type="evidence" value="ECO:0000250"/>
    <property type="project" value="YuBioLab"/>
</dbReference>
<dbReference type="GO" id="GO:0051461">
    <property type="term" value="P:positive regulation of corticotropin secretion"/>
    <property type="evidence" value="ECO:0000266"/>
    <property type="project" value="RGD"/>
</dbReference>
<dbReference type="GO" id="GO:0051464">
    <property type="term" value="P:positive regulation of cortisol secretion"/>
    <property type="evidence" value="ECO:0000266"/>
    <property type="project" value="RGD"/>
</dbReference>
<dbReference type="GO" id="GO:0007204">
    <property type="term" value="P:positive regulation of cytosolic calcium ion concentration"/>
    <property type="evidence" value="ECO:0000314"/>
    <property type="project" value="UniProtKB"/>
</dbReference>
<dbReference type="GO" id="GO:1904000">
    <property type="term" value="P:positive regulation of eating behavior"/>
    <property type="evidence" value="ECO:0000314"/>
    <property type="project" value="RGD"/>
</dbReference>
<dbReference type="GO" id="GO:2000253">
    <property type="term" value="P:positive regulation of feeding behavior"/>
    <property type="evidence" value="ECO:0000314"/>
    <property type="project" value="RGD"/>
</dbReference>
<dbReference type="GO" id="GO:1904346">
    <property type="term" value="P:positive regulation of gastric mucosal blood circulation"/>
    <property type="evidence" value="ECO:0000314"/>
    <property type="project" value="RGD"/>
</dbReference>
<dbReference type="GO" id="GO:1904306">
    <property type="term" value="P:positive regulation of gastro-intestinal system smooth muscle contraction"/>
    <property type="evidence" value="ECO:0000314"/>
    <property type="project" value="RGD"/>
</dbReference>
<dbReference type="GO" id="GO:0045927">
    <property type="term" value="P:positive regulation of growth"/>
    <property type="evidence" value="ECO:0000314"/>
    <property type="project" value="RGD"/>
</dbReference>
<dbReference type="GO" id="GO:0060124">
    <property type="term" value="P:positive regulation of growth hormone secretion"/>
    <property type="evidence" value="ECO:0000314"/>
    <property type="project" value="CACAO"/>
</dbReference>
<dbReference type="GO" id="GO:0040010">
    <property type="term" value="P:positive regulation of growth rate"/>
    <property type="evidence" value="ECO:0000314"/>
    <property type="project" value="RGD"/>
</dbReference>
<dbReference type="GO" id="GO:0032024">
    <property type="term" value="P:positive regulation of insulin secretion"/>
    <property type="evidence" value="ECO:0000314"/>
    <property type="project" value="UniProtKB"/>
</dbReference>
<dbReference type="GO" id="GO:0035774">
    <property type="term" value="P:positive regulation of insulin secretion involved in cellular response to glucose stimulus"/>
    <property type="evidence" value="ECO:0000314"/>
    <property type="project" value="RGD"/>
</dbReference>
<dbReference type="GO" id="GO:0043410">
    <property type="term" value="P:positive regulation of MAPK cascade"/>
    <property type="evidence" value="ECO:0000250"/>
    <property type="project" value="UniProtKB"/>
</dbReference>
<dbReference type="GO" id="GO:0032097">
    <property type="term" value="P:positive regulation of response to food"/>
    <property type="evidence" value="ECO:0000314"/>
    <property type="project" value="RGD"/>
</dbReference>
<dbReference type="GO" id="GO:0120058">
    <property type="term" value="P:positive regulation of small intestinal transit"/>
    <property type="evidence" value="ECO:0000314"/>
    <property type="project" value="RGD"/>
</dbReference>
<dbReference type="GO" id="GO:1904349">
    <property type="term" value="P:positive regulation of small intestine smooth muscle contraction"/>
    <property type="evidence" value="ECO:0000314"/>
    <property type="project" value="RGD"/>
</dbReference>
<dbReference type="GO" id="GO:1903672">
    <property type="term" value="P:positive regulation of sprouting angiogenesis"/>
    <property type="evidence" value="ECO:0000314"/>
    <property type="project" value="RGD"/>
</dbReference>
<dbReference type="GO" id="GO:0051965">
    <property type="term" value="P:positive regulation of synapse assembly"/>
    <property type="evidence" value="ECO:0000266"/>
    <property type="project" value="RGD"/>
</dbReference>
<dbReference type="GO" id="GO:1905564">
    <property type="term" value="P:positive regulation of vascular endothelial cell proliferation"/>
    <property type="evidence" value="ECO:0000314"/>
    <property type="project" value="RGD"/>
</dbReference>
<dbReference type="GO" id="GO:0099170">
    <property type="term" value="P:postsynaptic modulation of chemical synaptic transmission"/>
    <property type="evidence" value="ECO:0000314"/>
    <property type="project" value="SynGO"/>
</dbReference>
<dbReference type="GO" id="GO:0042127">
    <property type="term" value="P:regulation of cell population proliferation"/>
    <property type="evidence" value="ECO:0000250"/>
    <property type="project" value="UniProtKB"/>
</dbReference>
<dbReference type="GO" id="GO:1905333">
    <property type="term" value="P:regulation of gastric motility"/>
    <property type="evidence" value="ECO:0000314"/>
    <property type="project" value="RGD"/>
</dbReference>
<dbReference type="GO" id="GO:0099175">
    <property type="term" value="P:regulation of postsynapse organization"/>
    <property type="evidence" value="ECO:0000314"/>
    <property type="project" value="SynGO"/>
</dbReference>
<dbReference type="GO" id="GO:0032095">
    <property type="term" value="P:regulation of response to food"/>
    <property type="evidence" value="ECO:0000314"/>
    <property type="project" value="RGD"/>
</dbReference>
<dbReference type="GO" id="GO:0051969">
    <property type="term" value="P:regulation of transmission of nerve impulse"/>
    <property type="evidence" value="ECO:0000314"/>
    <property type="project" value="RGD"/>
</dbReference>
<dbReference type="GO" id="GO:0051602">
    <property type="term" value="P:response to electrical stimulus"/>
    <property type="evidence" value="ECO:0000270"/>
    <property type="project" value="RGD"/>
</dbReference>
<dbReference type="GO" id="GO:0043627">
    <property type="term" value="P:response to estrogen"/>
    <property type="evidence" value="ECO:0000250"/>
    <property type="project" value="UniProtKB"/>
</dbReference>
<dbReference type="GO" id="GO:0009725">
    <property type="term" value="P:response to hormone"/>
    <property type="evidence" value="ECO:0000250"/>
    <property type="project" value="UniProtKB"/>
</dbReference>
<dbReference type="GO" id="GO:0031667">
    <property type="term" value="P:response to nutrient levels"/>
    <property type="evidence" value="ECO:0000270"/>
    <property type="project" value="RGD"/>
</dbReference>
<dbReference type="GO" id="GO:0007416">
    <property type="term" value="P:synapse assembly"/>
    <property type="evidence" value="ECO:0000266"/>
    <property type="project" value="RGD"/>
</dbReference>
<dbReference type="InterPro" id="IPR006737">
    <property type="entry name" value="Motilin_assoc"/>
</dbReference>
<dbReference type="InterPro" id="IPR006738">
    <property type="entry name" value="Motilin_ghrelin"/>
</dbReference>
<dbReference type="InterPro" id="IPR005441">
    <property type="entry name" value="Preproghrelin"/>
</dbReference>
<dbReference type="PANTHER" id="PTHR14122:SF1">
    <property type="entry name" value="APPETITE-REGULATING HORMONE"/>
    <property type="match status" value="1"/>
</dbReference>
<dbReference type="PANTHER" id="PTHR14122">
    <property type="entry name" value="GHRELIN PRECURSOR"/>
    <property type="match status" value="1"/>
</dbReference>
<dbReference type="Pfam" id="PF04643">
    <property type="entry name" value="Motilin_assoc"/>
    <property type="match status" value="1"/>
</dbReference>
<dbReference type="Pfam" id="PF04644">
    <property type="entry name" value="Motilin_ghrelin"/>
    <property type="match status" value="1"/>
</dbReference>
<dbReference type="PRINTS" id="PR01624">
    <property type="entry name" value="GHRELIN"/>
</dbReference>
<accession>Q9QYH7</accession>
<accession>Q9ET69</accession>
<protein>
    <recommendedName>
        <fullName>Appetite-regulating hormone</fullName>
    </recommendedName>
    <alternativeName>
        <fullName>Growth hormone secretagogue</fullName>
    </alternativeName>
    <alternativeName>
        <fullName>Growth hormone-releasing peptide</fullName>
    </alternativeName>
    <alternativeName>
        <fullName>Motilin-related peptide</fullName>
    </alternativeName>
    <component>
        <recommendedName>
            <fullName>Ghrelin</fullName>
        </recommendedName>
    </component>
    <component>
        <recommendedName>
            <fullName>Obestatin-23</fullName>
        </recommendedName>
    </component>
    <component>
        <recommendedName>
            <fullName>Obestatin-13</fullName>
        </recommendedName>
    </component>
</protein>
<gene>
    <name type="primary">Ghrl</name>
</gene>
<sequence length="117" mass="13176">MVSSATICSLLLLSMLWMDMAMAGSSFLSPEHQKAQQRKESKKPPAKLQPRALEGWLHPEDRGQAEEAEEELEIRFNAPFDVGIKLSGAQYQQHGRALGKFLQDILWEEVKEAPANK</sequence>
<organism>
    <name type="scientific">Rattus norvegicus</name>
    <name type="common">Rat</name>
    <dbReference type="NCBI Taxonomy" id="10116"/>
    <lineage>
        <taxon>Eukaryota</taxon>
        <taxon>Metazoa</taxon>
        <taxon>Chordata</taxon>
        <taxon>Craniata</taxon>
        <taxon>Vertebrata</taxon>
        <taxon>Euteleostomi</taxon>
        <taxon>Mammalia</taxon>
        <taxon>Eutheria</taxon>
        <taxon>Euarchontoglires</taxon>
        <taxon>Glires</taxon>
        <taxon>Rodentia</taxon>
        <taxon>Myomorpha</taxon>
        <taxon>Muroidea</taxon>
        <taxon>Muridae</taxon>
        <taxon>Murinae</taxon>
        <taxon>Rattus</taxon>
    </lineage>
</organism>
<comment type="function">
    <molecule>Ghrelin</molecule>
    <text>Ghrelin is the ligand for growth hormone secretagogue receptor type 1 (GHSR). Induces the release of growth hormone from the pituitary. Has an appetite-stimulating effect, induces adiposity and stimulates gastric acid secretion. Involved in growth regulation.</text>
</comment>
<comment type="function">
    <molecule>Obestatin-23</molecule>
    <text>Obestatin may be the ligand for GPR39. May have an appetite-reducing effect resulting in decreased food intake. May reduce gastric emptying activity and jejunal motility.</text>
</comment>
<comment type="subcellular location">
    <subcellularLocation>
        <location>Secreted</location>
    </subcellularLocation>
</comment>
<comment type="alternative products">
    <event type="alternative splicing"/>
    <isoform>
        <id>Q9QYH7-1</id>
        <name>1</name>
        <name>Ghrelin</name>
        <sequence type="displayed"/>
    </isoform>
    <isoform>
        <id>Q9QYH7-2</id>
        <name>2</name>
        <name>des-Gln14-ghrelin</name>
        <sequence type="described" ref="VSP_003248"/>
    </isoform>
</comment>
<comment type="tissue specificity">
    <text evidence="5">Ghrelin is broadly expressed with higher expression in the stomach. Very low levels are detected in the hypothalamus, heart, lung, pancreas, intestine and adipose tissue. Obestatin is most highly expressed in jejunum, and also found in duodenum, stomach, pituitary, ileum, liver, hypothalamus and heart. Expressed in low levels in pancreas, cerebellum, cerebrum, kidney, testis, ovary colon and lung.</text>
</comment>
<comment type="PTM">
    <text evidence="1 3 4">O-octanoylated by GOAT/MBOAT4 (By similarity). O-octanoylation is essential for ghrelin activity. The replacement of Ser-26 by aromatic tryptophan preserves ghrelin activity (PubMed:10604470, PubMed:10801861).</text>
</comment>
<comment type="PTM">
    <text evidence="6">Amidation of Leu-98 is essential for obestatin activity.</text>
</comment>
<comment type="mass spectrometry" mass="3314.9" error="0.7" method="Electrospray" evidence="3">
    <molecule>Isoform 1</molecule>
    <text>The measured range is 24-51.</text>
</comment>
<comment type="mass spectrometry" mass="3187.1" error="0.6" method="Electrospray" evidence="4">
    <molecule>Isoform 2</molecule>
    <text>The measured range is 24-50.</text>
</comment>
<comment type="mass spectrometry" mass="2516.3" method="Unknown" evidence="6">
    <molecule>Obestatin-23</molecule>
</comment>
<comment type="similarity">
    <text evidence="8">Belongs to the motilin family.</text>
</comment>
<comment type="caution">
    <text evidence="8">PubMed:16284174 reports obestatin as ligand of GPR39. However, PubMed:17289961 and others are unable to reproduce these results. It also seems to be unclear whether obestatin has opposite effects on food intake compared with ghrelin.</text>
</comment>
<comment type="online information" name="Protein Spotlight">
    <link uri="https://www.proteinspotlight.org/back_issues/066"/>
    <text>Gut feelings - Issue 66 of January 2006</text>
</comment>